<evidence type="ECO:0000255" key="1"/>
<evidence type="ECO:0000255" key="2">
    <source>
        <dbReference type="PROSITE-ProRule" id="PRU00114"/>
    </source>
</evidence>
<evidence type="ECO:0000305" key="3"/>
<keyword id="KW-1015">Disulfide bond</keyword>
<keyword id="KW-0325">Glycoprotein</keyword>
<keyword id="KW-0393">Immunoglobulin domain</keyword>
<accession>P20768</accession>
<comment type="sequence caution" evidence="3">
    <conflict type="erroneous initiation">
        <sequence resource="EMBL-CDS" id="CAA32113"/>
    </conflict>
</comment>
<reference key="1">
    <citation type="journal article" date="1989" name="FEBS Lett.">
        <title>Nucleotide sequence of Suncus murinus immunoglobulin mu gene and comparison with mouse and human mu genes.</title>
        <authorList>
            <person name="Ishiguro H."/>
            <person name="Ichihara Y."/>
            <person name="Namikawa T."/>
            <person name="Nagatsu T."/>
            <person name="Kurosawa Y."/>
        </authorList>
    </citation>
    <scope>NUCLEOTIDE SEQUENCE [GENOMIC DNA]</scope>
    <source>
        <tissue>Liver</tissue>
    </source>
</reference>
<feature type="chain" id="PRO_0000153627" description="Ig mu chain C region">
    <location>
        <begin position="1" status="less than"/>
        <end position="457"/>
    </location>
</feature>
<feature type="region of interest" description="CH1">
    <location>
        <begin position="1"/>
        <end position="105"/>
    </location>
</feature>
<feature type="region of interest" description="CH2">
    <location>
        <begin position="106"/>
        <end position="220"/>
    </location>
</feature>
<feature type="region of interest" description="CH3">
    <location>
        <begin position="221"/>
        <end position="326"/>
    </location>
</feature>
<feature type="region of interest" description="CH4">
    <location>
        <begin position="327"/>
        <end position="457"/>
    </location>
</feature>
<feature type="glycosylation site" description="N-linked (GlcNAc...) asparagine" evidence="1">
    <location>
        <position position="45"/>
    </location>
</feature>
<feature type="glycosylation site" description="N-linked (GlcNAc...) asparagine" evidence="1">
    <location>
        <position position="113"/>
    </location>
</feature>
<feature type="glycosylation site" description="N-linked (GlcNAc...) asparagine" evidence="1">
    <location>
        <position position="212"/>
    </location>
</feature>
<feature type="glycosylation site" description="N-linked (GlcNAc...) asparagine" evidence="1">
    <location>
        <position position="276"/>
    </location>
</feature>
<feature type="glycosylation site" description="N-linked (GlcNAc...) asparagine" evidence="1">
    <location>
        <position position="283"/>
    </location>
</feature>
<feature type="glycosylation site" description="N-linked (GlcNAc...) asparagine" evidence="1">
    <location>
        <position position="444"/>
    </location>
</feature>
<feature type="disulfide bond" description="Interchain (with light chain)" evidence="3">
    <location>
        <position position="13"/>
    </location>
</feature>
<feature type="disulfide bond" evidence="2">
    <location>
        <begin position="27"/>
        <end position="89"/>
    </location>
</feature>
<feature type="disulfide bond" evidence="2">
    <location>
        <begin position="136"/>
        <end position="200"/>
    </location>
</feature>
<feature type="disulfide bond" description="Interchain (with heavy chain)" evidence="3">
    <location>
        <position position="217"/>
    </location>
</feature>
<feature type="disulfide bond" evidence="2">
    <location>
        <begin position="248"/>
        <end position="307"/>
    </location>
</feature>
<feature type="disulfide bond" description="Interchain (with heavy chain)" evidence="3">
    <location>
        <position position="295"/>
    </location>
</feature>
<feature type="disulfide bond" evidence="2">
    <location>
        <begin position="355"/>
        <end position="417"/>
    </location>
</feature>
<feature type="disulfide bond" description="Interchain (with heavy chain)" evidence="3">
    <location>
        <position position="456"/>
    </location>
</feature>
<feature type="non-terminal residue">
    <location>
        <position position="1"/>
    </location>
</feature>
<proteinExistence type="predicted"/>
<sequence length="457" mass="50074">SSSAPLLFPLVSCDSSLPDETQVTLGCLARDFLPRPVTFSWKFKNSSSISSQNIYNFPEVFTGGKYMATSQVLLPSTAILQSTDDYITCHTKHTTGEKEKKVELQVTPELPPNVSIFVPPRNSFSGNHPRTSQLICQASGFSPRTIVMSWLQRGEPVQPSLVSTSAVEAEPKGSGPTTFRVISRLTITENEWLSQREFTCQALHKGLTFQKNVSSVCMGDDTSTGISVFLLPPTFANIFLTQSAQLTCLVTGLATYDSLDISWSRQNGEALQTHVNISESHPNSTFTAKGHASVCREEWESGEKFTCTVQHSDLPSPLKQSLSRPKDVANDPPSVFVLPPAQEQLKLRESASITCLVKDFSPPDVFVQWQHHGQPVDPKHYVTSNPTPEPQNPGLYFVHSILTVSEKDWSSGESFSCVVGHEALPLSVTEKAVDKTSGKPTLYNVSLVLSDTASTCY</sequence>
<protein>
    <recommendedName>
        <fullName>Ig mu chain C region</fullName>
    </recommendedName>
</protein>
<name>IGHM_SUNMU</name>
<organism>
    <name type="scientific">Suncus murinus</name>
    <name type="common">Asian house shrew</name>
    <name type="synonym">Musk shrew</name>
    <dbReference type="NCBI Taxonomy" id="9378"/>
    <lineage>
        <taxon>Eukaryota</taxon>
        <taxon>Metazoa</taxon>
        <taxon>Chordata</taxon>
        <taxon>Craniata</taxon>
        <taxon>Vertebrata</taxon>
        <taxon>Euteleostomi</taxon>
        <taxon>Mammalia</taxon>
        <taxon>Eutheria</taxon>
        <taxon>Laurasiatheria</taxon>
        <taxon>Eulipotyphla</taxon>
        <taxon>Soricidae</taxon>
        <taxon>Crocidurinae</taxon>
        <taxon>Suncus</taxon>
    </lineage>
</organism>
<dbReference type="EMBL" id="X13920">
    <property type="protein sequence ID" value="CAA32113.1"/>
    <property type="status" value="ALT_INIT"/>
    <property type="molecule type" value="Genomic_DNA"/>
</dbReference>
<dbReference type="PIR" id="S03961">
    <property type="entry name" value="S03961"/>
</dbReference>
<dbReference type="SMR" id="P20768"/>
<dbReference type="CDD" id="cd16093">
    <property type="entry name" value="IgC1_CH2_Mu"/>
    <property type="match status" value="1"/>
</dbReference>
<dbReference type="CDD" id="cd05768">
    <property type="entry name" value="IgC1_CH3_IgAGD_CH4_IgAEM"/>
    <property type="match status" value="1"/>
</dbReference>
<dbReference type="FunFam" id="2.60.40.10:FF:000998">
    <property type="entry name" value="Immunoglobulin heavy constant epsilon"/>
    <property type="match status" value="1"/>
</dbReference>
<dbReference type="FunFam" id="2.60.40.10:FF:000463">
    <property type="entry name" value="Immunoglobulin heavy constant gamma 1"/>
    <property type="match status" value="2"/>
</dbReference>
<dbReference type="FunFam" id="2.60.40.10:FF:001836">
    <property type="entry name" value="Immunoglobulin heavy constant mu"/>
    <property type="match status" value="1"/>
</dbReference>
<dbReference type="Gene3D" id="2.60.40.10">
    <property type="entry name" value="Immunoglobulins"/>
    <property type="match status" value="4"/>
</dbReference>
<dbReference type="InterPro" id="IPR007110">
    <property type="entry name" value="Ig-like_dom"/>
</dbReference>
<dbReference type="InterPro" id="IPR036179">
    <property type="entry name" value="Ig-like_dom_sf"/>
</dbReference>
<dbReference type="InterPro" id="IPR013783">
    <property type="entry name" value="Ig-like_fold"/>
</dbReference>
<dbReference type="InterPro" id="IPR003006">
    <property type="entry name" value="Ig/MHC_CS"/>
</dbReference>
<dbReference type="InterPro" id="IPR003597">
    <property type="entry name" value="Ig_C1-set"/>
</dbReference>
<dbReference type="InterPro" id="IPR050380">
    <property type="entry name" value="Immune_Resp_Modulators"/>
</dbReference>
<dbReference type="PANTHER" id="PTHR23411">
    <property type="entry name" value="TAPASIN"/>
    <property type="match status" value="1"/>
</dbReference>
<dbReference type="Pfam" id="PF07654">
    <property type="entry name" value="C1-set"/>
    <property type="match status" value="4"/>
</dbReference>
<dbReference type="SMART" id="SM00407">
    <property type="entry name" value="IGc1"/>
    <property type="match status" value="4"/>
</dbReference>
<dbReference type="SUPFAM" id="SSF48726">
    <property type="entry name" value="Immunoglobulin"/>
    <property type="match status" value="4"/>
</dbReference>
<dbReference type="PROSITE" id="PS50835">
    <property type="entry name" value="IG_LIKE"/>
    <property type="match status" value="4"/>
</dbReference>
<dbReference type="PROSITE" id="PS00290">
    <property type="entry name" value="IG_MHC"/>
    <property type="match status" value="2"/>
</dbReference>